<keyword id="KW-0131">Cell cycle</keyword>
<keyword id="KW-0132">Cell division</keyword>
<keyword id="KW-0137">Centromere</keyword>
<keyword id="KW-0158">Chromosome</keyword>
<keyword id="KW-0175">Coiled coil</keyword>
<keyword id="KW-0995">Kinetochore</keyword>
<keyword id="KW-0498">Mitosis</keyword>
<keyword id="KW-1185">Reference proteome</keyword>
<name>MIS12_BOVIN</name>
<proteinExistence type="evidence at transcript level"/>
<sequence length="206" mass="24159">MSVDPMTYEAQFFGFTPQTCMLRIYIAFQDYLFEVMQAVEQVILKKLDGIPDCAISPVEIRKCTEKFLCFMKGRFDNLFGKMEQLFLQLILRIPPNVLLPEDKSQETQSYSEEEFHFLQKEIEQLQEKYKTELCTKQALLAELEEQKIVQAKLKQTLSLFDELENVGRDHGASDFREGLVFLIQNSRKLQNIRENVEKEGKRLKIS</sequence>
<protein>
    <recommendedName>
        <fullName>Protein MIS12 homolog</fullName>
    </recommendedName>
</protein>
<gene>
    <name type="primary">MIS12</name>
</gene>
<comment type="function">
    <text evidence="1">Part of the MIS12 complex, which may be fundamental for kinetochore formation and proper chromosome segregation during mitosis. Essential for proper kinetochore microtubule attachments.</text>
</comment>
<comment type="subunit">
    <text evidence="1">Component of the MIS12 complex composed of MIS12, DSN1, NSL1 and PMF1. Also interacts with KNL1, CBX3, CBX5, NDC80 and ZWINT.</text>
</comment>
<comment type="subcellular location">
    <subcellularLocation>
        <location evidence="1">Chromosome</location>
        <location evidence="1">Centromere</location>
        <location evidence="1">Kinetochore</location>
    </subcellularLocation>
    <text evidence="1">Associated with the kinetochore.</text>
</comment>
<comment type="similarity">
    <text evidence="3">Belongs to the mis12 family.</text>
</comment>
<organism>
    <name type="scientific">Bos taurus</name>
    <name type="common">Bovine</name>
    <dbReference type="NCBI Taxonomy" id="9913"/>
    <lineage>
        <taxon>Eukaryota</taxon>
        <taxon>Metazoa</taxon>
        <taxon>Chordata</taxon>
        <taxon>Craniata</taxon>
        <taxon>Vertebrata</taxon>
        <taxon>Euteleostomi</taxon>
        <taxon>Mammalia</taxon>
        <taxon>Eutheria</taxon>
        <taxon>Laurasiatheria</taxon>
        <taxon>Artiodactyla</taxon>
        <taxon>Ruminantia</taxon>
        <taxon>Pecora</taxon>
        <taxon>Bovidae</taxon>
        <taxon>Bovinae</taxon>
        <taxon>Bos</taxon>
    </lineage>
</organism>
<dbReference type="EMBL" id="BT020720">
    <property type="protein sequence ID" value="AAX08737.1"/>
    <property type="molecule type" value="mRNA"/>
</dbReference>
<dbReference type="EMBL" id="BC119961">
    <property type="protein sequence ID" value="AAI19962.1"/>
    <property type="molecule type" value="mRNA"/>
</dbReference>
<dbReference type="RefSeq" id="NP_001070437.1">
    <property type="nucleotide sequence ID" value="NM_001076969.1"/>
</dbReference>
<dbReference type="RefSeq" id="XP_010814246.1">
    <property type="nucleotide sequence ID" value="XM_010815944.4"/>
</dbReference>
<dbReference type="SMR" id="Q5EA49"/>
<dbReference type="FunCoup" id="Q5EA49">
    <property type="interactions" value="2473"/>
</dbReference>
<dbReference type="STRING" id="9913.ENSBTAP00000027230"/>
<dbReference type="PaxDb" id="9913-ENSBTAP00000027230"/>
<dbReference type="Ensembl" id="ENSBTAT00000027230.5">
    <property type="protein sequence ID" value="ENSBTAP00000027230.3"/>
    <property type="gene ID" value="ENSBTAG00000020432.5"/>
</dbReference>
<dbReference type="Ensembl" id="ENSBTAT00000120354.1">
    <property type="protein sequence ID" value="ENSBTAP00000101764.1"/>
    <property type="gene ID" value="ENSBTAG00000020432.5"/>
</dbReference>
<dbReference type="GeneID" id="767858"/>
<dbReference type="KEGG" id="bta:767858"/>
<dbReference type="CTD" id="79003"/>
<dbReference type="VEuPathDB" id="HostDB:ENSBTAG00000020432"/>
<dbReference type="VGNC" id="VGNC:31484">
    <property type="gene designation" value="MIS12"/>
</dbReference>
<dbReference type="eggNOG" id="ENOG502RXZ1">
    <property type="taxonomic scope" value="Eukaryota"/>
</dbReference>
<dbReference type="GeneTree" id="ENSGT00390000018665"/>
<dbReference type="HOGENOM" id="CLU_097032_0_0_1"/>
<dbReference type="InParanoid" id="Q5EA49"/>
<dbReference type="OMA" id="DYLFEMM"/>
<dbReference type="OrthoDB" id="1884855at2759"/>
<dbReference type="TreeFam" id="TF101136"/>
<dbReference type="Reactome" id="R-BTA-141444">
    <property type="pathway name" value="Amplification of signal from unattached kinetochores via a MAD2 inhibitory signal"/>
</dbReference>
<dbReference type="Reactome" id="R-BTA-2467813">
    <property type="pathway name" value="Separation of Sister Chromatids"/>
</dbReference>
<dbReference type="Reactome" id="R-BTA-2500257">
    <property type="pathway name" value="Resolution of Sister Chromatid Cohesion"/>
</dbReference>
<dbReference type="Reactome" id="R-BTA-5663220">
    <property type="pathway name" value="RHO GTPases Activate Formins"/>
</dbReference>
<dbReference type="Reactome" id="R-BTA-68877">
    <property type="pathway name" value="Mitotic Prometaphase"/>
</dbReference>
<dbReference type="Reactome" id="R-BTA-9648025">
    <property type="pathway name" value="EML4 and NUDC in mitotic spindle formation"/>
</dbReference>
<dbReference type="Proteomes" id="UP000009136">
    <property type="component" value="Chromosome 19"/>
</dbReference>
<dbReference type="Bgee" id="ENSBTAG00000020432">
    <property type="expression patterns" value="Expressed in corpus epididymis and 104 other cell types or tissues"/>
</dbReference>
<dbReference type="GO" id="GO:0000444">
    <property type="term" value="C:MIS12/MIND type complex"/>
    <property type="evidence" value="ECO:0000250"/>
    <property type="project" value="UniProtKB"/>
</dbReference>
<dbReference type="GO" id="GO:0005634">
    <property type="term" value="C:nucleus"/>
    <property type="evidence" value="ECO:0007669"/>
    <property type="project" value="Ensembl"/>
</dbReference>
<dbReference type="GO" id="GO:0051315">
    <property type="term" value="P:attachment of mitotic spindle microtubules to kinetochore"/>
    <property type="evidence" value="ECO:0000250"/>
    <property type="project" value="UniProtKB"/>
</dbReference>
<dbReference type="GO" id="GO:0051301">
    <property type="term" value="P:cell division"/>
    <property type="evidence" value="ECO:0007669"/>
    <property type="project" value="UniProtKB-KW"/>
</dbReference>
<dbReference type="GO" id="GO:0051382">
    <property type="term" value="P:kinetochore assembly"/>
    <property type="evidence" value="ECO:0000318"/>
    <property type="project" value="GO_Central"/>
</dbReference>
<dbReference type="GO" id="GO:0000070">
    <property type="term" value="P:mitotic sister chromatid segregation"/>
    <property type="evidence" value="ECO:0000318"/>
    <property type="project" value="GO_Central"/>
</dbReference>
<dbReference type="InterPro" id="IPR008685">
    <property type="entry name" value="Centromere_Mis12"/>
</dbReference>
<dbReference type="PANTHER" id="PTHR14527">
    <property type="entry name" value="PROTEIN MIS12 HOMOLOG"/>
    <property type="match status" value="1"/>
</dbReference>
<dbReference type="PANTHER" id="PTHR14527:SF2">
    <property type="entry name" value="PROTEIN MIS12 HOMOLOG"/>
    <property type="match status" value="1"/>
</dbReference>
<dbReference type="Pfam" id="PF05859">
    <property type="entry name" value="Mis12"/>
    <property type="match status" value="1"/>
</dbReference>
<reference key="1">
    <citation type="journal article" date="2005" name="BMC Genomics">
        <title>Characterization of 954 bovine full-CDS cDNA sequences.</title>
        <authorList>
            <person name="Harhay G.P."/>
            <person name="Sonstegard T.S."/>
            <person name="Keele J.W."/>
            <person name="Heaton M.P."/>
            <person name="Clawson M.L."/>
            <person name="Snelling W.M."/>
            <person name="Wiedmann R.T."/>
            <person name="Van Tassell C.P."/>
            <person name="Smith T.P.L."/>
        </authorList>
    </citation>
    <scope>NUCLEOTIDE SEQUENCE [LARGE SCALE MRNA]</scope>
</reference>
<reference key="2">
    <citation type="submission" date="2006-08" db="EMBL/GenBank/DDBJ databases">
        <authorList>
            <consortium name="NIH - Mammalian Gene Collection (MGC) project"/>
        </authorList>
    </citation>
    <scope>NUCLEOTIDE SEQUENCE [LARGE SCALE MRNA]</scope>
    <source>
        <strain>Hereford</strain>
        <tissue>Fetal muscle</tissue>
    </source>
</reference>
<evidence type="ECO:0000250" key="1">
    <source>
        <dbReference type="UniProtKB" id="Q9H081"/>
    </source>
</evidence>
<evidence type="ECO:0000255" key="2"/>
<evidence type="ECO:0000305" key="3"/>
<accession>Q5EA49</accession>
<feature type="chain" id="PRO_0000283719" description="Protein MIS12 homolog">
    <location>
        <begin position="1"/>
        <end position="206"/>
    </location>
</feature>
<feature type="coiled-coil region" evidence="2">
    <location>
        <begin position="108"/>
        <end position="205"/>
    </location>
</feature>